<evidence type="ECO:0000255" key="1">
    <source>
        <dbReference type="HAMAP-Rule" id="MF_01631"/>
    </source>
</evidence>
<evidence type="ECO:0000256" key="2">
    <source>
        <dbReference type="SAM" id="MobiDB-lite"/>
    </source>
</evidence>
<proteinExistence type="inferred from homology"/>
<protein>
    <recommendedName>
        <fullName evidence="1">Bifunctional protein GlmU</fullName>
    </recommendedName>
    <domain>
        <recommendedName>
            <fullName evidence="1">UDP-N-acetylglucosamine pyrophosphorylase</fullName>
            <ecNumber evidence="1">2.7.7.23</ecNumber>
        </recommendedName>
        <alternativeName>
            <fullName evidence="1">N-acetylglucosamine-1-phosphate uridyltransferase</fullName>
        </alternativeName>
    </domain>
    <domain>
        <recommendedName>
            <fullName evidence="1">Glucosamine-1-phosphate N-acetyltransferase</fullName>
            <ecNumber evidence="1">2.3.1.157</ecNumber>
        </recommendedName>
    </domain>
</protein>
<organism>
    <name type="scientific">Corynebacterium glutamicum (strain R)</name>
    <dbReference type="NCBI Taxonomy" id="340322"/>
    <lineage>
        <taxon>Bacteria</taxon>
        <taxon>Bacillati</taxon>
        <taxon>Actinomycetota</taxon>
        <taxon>Actinomycetes</taxon>
        <taxon>Mycobacteriales</taxon>
        <taxon>Corynebacteriaceae</taxon>
        <taxon>Corynebacterium</taxon>
    </lineage>
</organism>
<reference key="1">
    <citation type="journal article" date="2007" name="Microbiology">
        <title>Comparative analysis of the Corynebacterium glutamicum group and complete genome sequence of strain R.</title>
        <authorList>
            <person name="Yukawa H."/>
            <person name="Omumasaba C.A."/>
            <person name="Nonaka H."/>
            <person name="Kos P."/>
            <person name="Okai N."/>
            <person name="Suzuki N."/>
            <person name="Suda M."/>
            <person name="Tsuge Y."/>
            <person name="Watanabe J."/>
            <person name="Ikeda Y."/>
            <person name="Vertes A.A."/>
            <person name="Inui M."/>
        </authorList>
    </citation>
    <scope>NUCLEOTIDE SEQUENCE [LARGE SCALE GENOMIC DNA]</scope>
    <source>
        <strain>R</strain>
    </source>
</reference>
<comment type="function">
    <text evidence="1">Catalyzes the last two sequential reactions in the de novo biosynthetic pathway for UDP-N-acetylglucosamine (UDP-GlcNAc). The C-terminal domain catalyzes the transfer of acetyl group from acetyl coenzyme A to glucosamine-1-phosphate (GlcN-1-P) to produce N-acetylglucosamine-1-phosphate (GlcNAc-1-P), which is converted into UDP-GlcNAc by the transfer of uridine 5-monophosphate (from uridine 5-triphosphate), a reaction catalyzed by the N-terminal domain.</text>
</comment>
<comment type="catalytic activity">
    <reaction evidence="1">
        <text>alpha-D-glucosamine 1-phosphate + acetyl-CoA = N-acetyl-alpha-D-glucosamine 1-phosphate + CoA + H(+)</text>
        <dbReference type="Rhea" id="RHEA:13725"/>
        <dbReference type="ChEBI" id="CHEBI:15378"/>
        <dbReference type="ChEBI" id="CHEBI:57287"/>
        <dbReference type="ChEBI" id="CHEBI:57288"/>
        <dbReference type="ChEBI" id="CHEBI:57776"/>
        <dbReference type="ChEBI" id="CHEBI:58516"/>
        <dbReference type="EC" id="2.3.1.157"/>
    </reaction>
</comment>
<comment type="catalytic activity">
    <reaction evidence="1">
        <text>N-acetyl-alpha-D-glucosamine 1-phosphate + UTP + H(+) = UDP-N-acetyl-alpha-D-glucosamine + diphosphate</text>
        <dbReference type="Rhea" id="RHEA:13509"/>
        <dbReference type="ChEBI" id="CHEBI:15378"/>
        <dbReference type="ChEBI" id="CHEBI:33019"/>
        <dbReference type="ChEBI" id="CHEBI:46398"/>
        <dbReference type="ChEBI" id="CHEBI:57705"/>
        <dbReference type="ChEBI" id="CHEBI:57776"/>
        <dbReference type="EC" id="2.7.7.23"/>
    </reaction>
</comment>
<comment type="cofactor">
    <cofactor evidence="1">
        <name>Mg(2+)</name>
        <dbReference type="ChEBI" id="CHEBI:18420"/>
    </cofactor>
    <text evidence="1">Binds 1 Mg(2+) ion per subunit.</text>
</comment>
<comment type="pathway">
    <text evidence="1">Nucleotide-sugar biosynthesis; UDP-N-acetyl-alpha-D-glucosamine biosynthesis; N-acetyl-alpha-D-glucosamine 1-phosphate from alpha-D-glucosamine 6-phosphate (route II): step 2/2.</text>
</comment>
<comment type="pathway">
    <text evidence="1">Nucleotide-sugar biosynthesis; UDP-N-acetyl-alpha-D-glucosamine biosynthesis; UDP-N-acetyl-alpha-D-glucosamine from N-acetyl-alpha-D-glucosamine 1-phosphate: step 1/1.</text>
</comment>
<comment type="pathway">
    <text evidence="1">Bacterial outer membrane biogenesis; LPS lipid A biosynthesis.</text>
</comment>
<comment type="subunit">
    <text evidence="1">Homotrimer.</text>
</comment>
<comment type="subcellular location">
    <subcellularLocation>
        <location evidence="1">Cytoplasm</location>
    </subcellularLocation>
</comment>
<comment type="similarity">
    <text evidence="1">In the N-terminal section; belongs to the N-acetylglucosamine-1-phosphate uridyltransferase family.</text>
</comment>
<comment type="similarity">
    <text evidence="1">In the C-terminal section; belongs to the transferase hexapeptide repeat family.</text>
</comment>
<feature type="chain" id="PRO_0000337719" description="Bifunctional protein GlmU">
    <location>
        <begin position="1"/>
        <end position="485"/>
    </location>
</feature>
<feature type="region of interest" description="Pyrophosphorylase" evidence="1">
    <location>
        <begin position="1"/>
        <end position="241"/>
    </location>
</feature>
<feature type="region of interest" description="Linker" evidence="1">
    <location>
        <begin position="242"/>
        <end position="262"/>
    </location>
</feature>
<feature type="region of interest" description="N-acetyltransferase" evidence="1">
    <location>
        <begin position="263"/>
        <end position="485"/>
    </location>
</feature>
<feature type="region of interest" description="Disordered" evidence="2">
    <location>
        <begin position="465"/>
        <end position="485"/>
    </location>
</feature>
<feature type="compositionally biased region" description="Low complexity" evidence="2">
    <location>
        <begin position="469"/>
        <end position="478"/>
    </location>
</feature>
<feature type="active site" description="Proton acceptor" evidence="1">
    <location>
        <position position="374"/>
    </location>
</feature>
<feature type="binding site" evidence="1">
    <location>
        <begin position="13"/>
        <end position="16"/>
    </location>
    <ligand>
        <name>UDP-N-acetyl-alpha-D-glucosamine</name>
        <dbReference type="ChEBI" id="CHEBI:57705"/>
    </ligand>
</feature>
<feature type="binding site" evidence="1">
    <location>
        <position position="27"/>
    </location>
    <ligand>
        <name>UDP-N-acetyl-alpha-D-glucosamine</name>
        <dbReference type="ChEBI" id="CHEBI:57705"/>
    </ligand>
</feature>
<feature type="binding site" evidence="1">
    <location>
        <position position="84"/>
    </location>
    <ligand>
        <name>UDP-N-acetyl-alpha-D-glucosamine</name>
        <dbReference type="ChEBI" id="CHEBI:57705"/>
    </ligand>
</feature>
<feature type="binding site" evidence="1">
    <location>
        <begin position="89"/>
        <end position="90"/>
    </location>
    <ligand>
        <name>UDP-N-acetyl-alpha-D-glucosamine</name>
        <dbReference type="ChEBI" id="CHEBI:57705"/>
    </ligand>
</feature>
<feature type="binding site" evidence="1">
    <location>
        <position position="114"/>
    </location>
    <ligand>
        <name>Mg(2+)</name>
        <dbReference type="ChEBI" id="CHEBI:18420"/>
    </ligand>
</feature>
<feature type="binding site" evidence="1">
    <location>
        <position position="151"/>
    </location>
    <ligand>
        <name>UDP-N-acetyl-alpha-D-glucosamine</name>
        <dbReference type="ChEBI" id="CHEBI:57705"/>
    </ligand>
</feature>
<feature type="binding site" evidence="1">
    <location>
        <position position="166"/>
    </location>
    <ligand>
        <name>UDP-N-acetyl-alpha-D-glucosamine</name>
        <dbReference type="ChEBI" id="CHEBI:57705"/>
    </ligand>
</feature>
<feature type="binding site" evidence="1">
    <location>
        <position position="181"/>
    </location>
    <ligand>
        <name>UDP-N-acetyl-alpha-D-glucosamine</name>
        <dbReference type="ChEBI" id="CHEBI:57705"/>
    </ligand>
</feature>
<feature type="binding site" evidence="1">
    <location>
        <position position="239"/>
    </location>
    <ligand>
        <name>Mg(2+)</name>
        <dbReference type="ChEBI" id="CHEBI:18420"/>
    </ligand>
</feature>
<feature type="binding site" evidence="1">
    <location>
        <position position="239"/>
    </location>
    <ligand>
        <name>UDP-N-acetyl-alpha-D-glucosamine</name>
        <dbReference type="ChEBI" id="CHEBI:57705"/>
    </ligand>
</feature>
<feature type="binding site" evidence="1">
    <location>
        <position position="344"/>
    </location>
    <ligand>
        <name>UDP-N-acetyl-alpha-D-glucosamine</name>
        <dbReference type="ChEBI" id="CHEBI:57705"/>
    </ligand>
</feature>
<feature type="binding site" evidence="1">
    <location>
        <position position="362"/>
    </location>
    <ligand>
        <name>UDP-N-acetyl-alpha-D-glucosamine</name>
        <dbReference type="ChEBI" id="CHEBI:57705"/>
    </ligand>
</feature>
<feature type="binding site" evidence="1">
    <location>
        <position position="377"/>
    </location>
    <ligand>
        <name>UDP-N-acetyl-alpha-D-glucosamine</name>
        <dbReference type="ChEBI" id="CHEBI:57705"/>
    </ligand>
</feature>
<feature type="binding site" evidence="1">
    <location>
        <position position="388"/>
    </location>
    <ligand>
        <name>UDP-N-acetyl-alpha-D-glucosamine</name>
        <dbReference type="ChEBI" id="CHEBI:57705"/>
    </ligand>
</feature>
<feature type="binding site" evidence="1">
    <location>
        <position position="391"/>
    </location>
    <ligand>
        <name>acetyl-CoA</name>
        <dbReference type="ChEBI" id="CHEBI:57288"/>
    </ligand>
</feature>
<feature type="binding site" evidence="1">
    <location>
        <begin position="397"/>
        <end position="398"/>
    </location>
    <ligand>
        <name>acetyl-CoA</name>
        <dbReference type="ChEBI" id="CHEBI:57288"/>
    </ligand>
</feature>
<feature type="binding site" evidence="1">
    <location>
        <position position="416"/>
    </location>
    <ligand>
        <name>acetyl-CoA</name>
        <dbReference type="ChEBI" id="CHEBI:57288"/>
    </ligand>
</feature>
<feature type="binding site" evidence="1">
    <location>
        <position position="434"/>
    </location>
    <ligand>
        <name>acetyl-CoA</name>
        <dbReference type="ChEBI" id="CHEBI:57288"/>
    </ligand>
</feature>
<gene>
    <name evidence="1" type="primary">glmU</name>
    <name type="ordered locus">cgR_1044</name>
</gene>
<accession>A4QCS3</accession>
<keyword id="KW-0012">Acyltransferase</keyword>
<keyword id="KW-0133">Cell shape</keyword>
<keyword id="KW-0961">Cell wall biogenesis/degradation</keyword>
<keyword id="KW-0963">Cytoplasm</keyword>
<keyword id="KW-0460">Magnesium</keyword>
<keyword id="KW-0479">Metal-binding</keyword>
<keyword id="KW-0511">Multifunctional enzyme</keyword>
<keyword id="KW-0548">Nucleotidyltransferase</keyword>
<keyword id="KW-0573">Peptidoglycan synthesis</keyword>
<keyword id="KW-0677">Repeat</keyword>
<keyword id="KW-0808">Transferase</keyword>
<dbReference type="EC" id="2.7.7.23" evidence="1"/>
<dbReference type="EC" id="2.3.1.157" evidence="1"/>
<dbReference type="EMBL" id="AP009044">
    <property type="protein sequence ID" value="BAF54020.1"/>
    <property type="molecule type" value="Genomic_DNA"/>
</dbReference>
<dbReference type="RefSeq" id="WP_011896974.1">
    <property type="nucleotide sequence ID" value="NC_009342.1"/>
</dbReference>
<dbReference type="SMR" id="A4QCS3"/>
<dbReference type="KEGG" id="cgt:cgR_1044"/>
<dbReference type="HOGENOM" id="CLU_029499_15_2_11"/>
<dbReference type="PhylomeDB" id="A4QCS3"/>
<dbReference type="UniPathway" id="UPA00113">
    <property type="reaction ID" value="UER00532"/>
</dbReference>
<dbReference type="UniPathway" id="UPA00113">
    <property type="reaction ID" value="UER00533"/>
</dbReference>
<dbReference type="UniPathway" id="UPA00973"/>
<dbReference type="Proteomes" id="UP000006698">
    <property type="component" value="Chromosome"/>
</dbReference>
<dbReference type="GO" id="GO:0005737">
    <property type="term" value="C:cytoplasm"/>
    <property type="evidence" value="ECO:0007669"/>
    <property type="project" value="UniProtKB-SubCell"/>
</dbReference>
<dbReference type="GO" id="GO:0016020">
    <property type="term" value="C:membrane"/>
    <property type="evidence" value="ECO:0007669"/>
    <property type="project" value="GOC"/>
</dbReference>
<dbReference type="GO" id="GO:0019134">
    <property type="term" value="F:glucosamine-1-phosphate N-acetyltransferase activity"/>
    <property type="evidence" value="ECO:0007669"/>
    <property type="project" value="UniProtKB-UniRule"/>
</dbReference>
<dbReference type="GO" id="GO:0000287">
    <property type="term" value="F:magnesium ion binding"/>
    <property type="evidence" value="ECO:0007669"/>
    <property type="project" value="UniProtKB-UniRule"/>
</dbReference>
<dbReference type="GO" id="GO:0003977">
    <property type="term" value="F:UDP-N-acetylglucosamine diphosphorylase activity"/>
    <property type="evidence" value="ECO:0007669"/>
    <property type="project" value="UniProtKB-UniRule"/>
</dbReference>
<dbReference type="GO" id="GO:0000902">
    <property type="term" value="P:cell morphogenesis"/>
    <property type="evidence" value="ECO:0007669"/>
    <property type="project" value="UniProtKB-UniRule"/>
</dbReference>
<dbReference type="GO" id="GO:0071555">
    <property type="term" value="P:cell wall organization"/>
    <property type="evidence" value="ECO:0007669"/>
    <property type="project" value="UniProtKB-KW"/>
</dbReference>
<dbReference type="GO" id="GO:0009245">
    <property type="term" value="P:lipid A biosynthetic process"/>
    <property type="evidence" value="ECO:0007669"/>
    <property type="project" value="UniProtKB-UniRule"/>
</dbReference>
<dbReference type="GO" id="GO:0009252">
    <property type="term" value="P:peptidoglycan biosynthetic process"/>
    <property type="evidence" value="ECO:0007669"/>
    <property type="project" value="UniProtKB-UniRule"/>
</dbReference>
<dbReference type="GO" id="GO:0008360">
    <property type="term" value="P:regulation of cell shape"/>
    <property type="evidence" value="ECO:0007669"/>
    <property type="project" value="UniProtKB-KW"/>
</dbReference>
<dbReference type="GO" id="GO:0006048">
    <property type="term" value="P:UDP-N-acetylglucosamine biosynthetic process"/>
    <property type="evidence" value="ECO:0007669"/>
    <property type="project" value="UniProtKB-UniPathway"/>
</dbReference>
<dbReference type="CDD" id="cd02540">
    <property type="entry name" value="GT2_GlmU_N_bac"/>
    <property type="match status" value="1"/>
</dbReference>
<dbReference type="CDD" id="cd03353">
    <property type="entry name" value="LbH_GlmU_C"/>
    <property type="match status" value="1"/>
</dbReference>
<dbReference type="Gene3D" id="2.160.10.10">
    <property type="entry name" value="Hexapeptide repeat proteins"/>
    <property type="match status" value="1"/>
</dbReference>
<dbReference type="Gene3D" id="3.90.550.10">
    <property type="entry name" value="Spore Coat Polysaccharide Biosynthesis Protein SpsA, Chain A"/>
    <property type="match status" value="1"/>
</dbReference>
<dbReference type="HAMAP" id="MF_01631">
    <property type="entry name" value="GlmU"/>
    <property type="match status" value="1"/>
</dbReference>
<dbReference type="InterPro" id="IPR005882">
    <property type="entry name" value="Bifunctional_GlmU"/>
</dbReference>
<dbReference type="InterPro" id="IPR050065">
    <property type="entry name" value="GlmU-like"/>
</dbReference>
<dbReference type="InterPro" id="IPR038009">
    <property type="entry name" value="GlmU_C_LbH"/>
</dbReference>
<dbReference type="InterPro" id="IPR001451">
    <property type="entry name" value="Hexapep"/>
</dbReference>
<dbReference type="InterPro" id="IPR005835">
    <property type="entry name" value="NTP_transferase_dom"/>
</dbReference>
<dbReference type="InterPro" id="IPR029044">
    <property type="entry name" value="Nucleotide-diphossugar_trans"/>
</dbReference>
<dbReference type="InterPro" id="IPR011004">
    <property type="entry name" value="Trimer_LpxA-like_sf"/>
</dbReference>
<dbReference type="NCBIfam" id="TIGR01173">
    <property type="entry name" value="glmU"/>
    <property type="match status" value="1"/>
</dbReference>
<dbReference type="NCBIfam" id="NF010932">
    <property type="entry name" value="PRK14352.1"/>
    <property type="match status" value="1"/>
</dbReference>
<dbReference type="PANTHER" id="PTHR43584:SF3">
    <property type="entry name" value="BIFUNCTIONAL PROTEIN GLMU"/>
    <property type="match status" value="1"/>
</dbReference>
<dbReference type="PANTHER" id="PTHR43584">
    <property type="entry name" value="NUCLEOTIDYL TRANSFERASE"/>
    <property type="match status" value="1"/>
</dbReference>
<dbReference type="Pfam" id="PF00132">
    <property type="entry name" value="Hexapep"/>
    <property type="match status" value="1"/>
</dbReference>
<dbReference type="Pfam" id="PF00483">
    <property type="entry name" value="NTP_transferase"/>
    <property type="match status" value="1"/>
</dbReference>
<dbReference type="SUPFAM" id="SSF53448">
    <property type="entry name" value="Nucleotide-diphospho-sugar transferases"/>
    <property type="match status" value="1"/>
</dbReference>
<dbReference type="SUPFAM" id="SSF51161">
    <property type="entry name" value="Trimeric LpxA-like enzymes"/>
    <property type="match status" value="1"/>
</dbReference>
<sequence>MSASDFSSAVVVLAAGAGTRMKSDLQKTLHSIGGRSLISHSLHAAAGLNPEHIVAVIGHGRDQVGPAVAQVAEELDREVLIAIQEEQNGTGHAVQCAMDQLDGFEGTIIVTNGDVPLLTDHTLSALLDAHVEVPTAVTVLTMRLDDPTGYGRIVRNEEGEVTAIVEQKDASAEIQAIDEVNSGVFAFDAAILRSALAELKSDNAQGELYLTDVLGIARGEGHPVRAHTATDARELAGVNDRVQLAEAGAELNRRTVIAAMRGGATIVDPATTWIDVEVSIGRDVIIHPGTQLKGETVIGDRVEVGPDTTLTNMTINEGASVVRTHGFDSTIGENATVGPFTYIRPGTTLGPEGKLGGFVETKKATIGRGSKVPHLTYVGDATIGEESNIGASSVFVNYDGENKHHTTIGSHVRTGSDTMFIAPVTVGDGAYSGAGTVIKDDVPPGALAVSGGRQRNIEGWVQKKRPGTAAAQAAEAAQNVHNQEG</sequence>
<name>GLMU_CORGB</name>